<comment type="function">
    <text evidence="1">Cleaves peptides in various proteins in a process that requires ATP hydrolysis. Has a chymotrypsin-like activity. Plays a major role in the degradation of misfolded proteins.</text>
</comment>
<comment type="catalytic activity">
    <reaction evidence="1">
        <text>Hydrolysis of proteins to small peptides in the presence of ATP and magnesium. alpha-casein is the usual test substrate. In the absence of ATP, only oligopeptides shorter than five residues are hydrolyzed (such as succinyl-Leu-Tyr-|-NHMec, and Leu-Tyr-Leu-|-Tyr-Trp, in which cleavage of the -Tyr-|-Leu- and -Tyr-|-Trp bonds also occurs).</text>
        <dbReference type="EC" id="3.4.21.92"/>
    </reaction>
</comment>
<comment type="subunit">
    <text evidence="1">Fourteen ClpP subunits assemble into 2 heptameric rings which stack back to back to give a disk-like structure with a central cavity, resembling the structure of eukaryotic proteasomes.</text>
</comment>
<comment type="subcellular location">
    <subcellularLocation>
        <location evidence="1">Cytoplasm</location>
    </subcellularLocation>
</comment>
<comment type="similarity">
    <text evidence="1">Belongs to the peptidase S14 family.</text>
</comment>
<feature type="chain" id="PRO_1000060258" description="ATP-dependent Clp protease proteolytic subunit">
    <location>
        <begin position="1"/>
        <end position="198"/>
    </location>
</feature>
<feature type="active site" description="Nucleophile" evidence="1">
    <location>
        <position position="98"/>
    </location>
</feature>
<feature type="active site" evidence="1">
    <location>
        <position position="123"/>
    </location>
</feature>
<proteinExistence type="inferred from homology"/>
<name>CLPP_BACP2</name>
<reference key="1">
    <citation type="journal article" date="2007" name="PLoS ONE">
        <title>Paradoxical DNA repair and peroxide resistance gene conservation in Bacillus pumilus SAFR-032.</title>
        <authorList>
            <person name="Gioia J."/>
            <person name="Yerrapragada S."/>
            <person name="Qin X."/>
            <person name="Jiang H."/>
            <person name="Igboeli O.C."/>
            <person name="Muzny D."/>
            <person name="Dugan-Rocha S."/>
            <person name="Ding Y."/>
            <person name="Hawes A."/>
            <person name="Liu W."/>
            <person name="Perez L."/>
            <person name="Kovar C."/>
            <person name="Dinh H."/>
            <person name="Lee S."/>
            <person name="Nazareth L."/>
            <person name="Blyth P."/>
            <person name="Holder M."/>
            <person name="Buhay C."/>
            <person name="Tirumalai M.R."/>
            <person name="Liu Y."/>
            <person name="Dasgupta I."/>
            <person name="Bokhetache L."/>
            <person name="Fujita M."/>
            <person name="Karouia F."/>
            <person name="Eswara Moorthy P."/>
            <person name="Siefert J."/>
            <person name="Uzman A."/>
            <person name="Buzumbo P."/>
            <person name="Verma A."/>
            <person name="Zwiya H."/>
            <person name="McWilliams B.D."/>
            <person name="Olowu A."/>
            <person name="Clinkenbeard K.D."/>
            <person name="Newcombe D."/>
            <person name="Golebiewski L."/>
            <person name="Petrosino J.F."/>
            <person name="Nicholson W.L."/>
            <person name="Fox G.E."/>
            <person name="Venkateswaran K."/>
            <person name="Highlander S.K."/>
            <person name="Weinstock G.M."/>
        </authorList>
    </citation>
    <scope>NUCLEOTIDE SEQUENCE [LARGE SCALE GENOMIC DNA]</scope>
    <source>
        <strain>SAFR-032</strain>
    </source>
</reference>
<gene>
    <name evidence="1" type="primary">clpP</name>
    <name type="ordered locus">BPUM_3102</name>
</gene>
<organism>
    <name type="scientific">Bacillus pumilus (strain SAFR-032)</name>
    <dbReference type="NCBI Taxonomy" id="315750"/>
    <lineage>
        <taxon>Bacteria</taxon>
        <taxon>Bacillati</taxon>
        <taxon>Bacillota</taxon>
        <taxon>Bacilli</taxon>
        <taxon>Bacillales</taxon>
        <taxon>Bacillaceae</taxon>
        <taxon>Bacillus</taxon>
    </lineage>
</organism>
<keyword id="KW-0963">Cytoplasm</keyword>
<keyword id="KW-0378">Hydrolase</keyword>
<keyword id="KW-0645">Protease</keyword>
<keyword id="KW-0720">Serine protease</keyword>
<sequence>MNLIPTVIEQTNRGERAYDIYSRLLKDRIIMLGSAIDDNVANSIVSQLLFLEAEDPEKDISIYINSPGGSITAGMAIYDTMQFIKPKVSTICIGMAASMGAFLLAAGEKGKRYALPNSEVMIHQPLGGAQGQATEIEIAAKRILSLRDKLNQVLAERTGQPIEVIERDTDRDNFKTAEEALQYGLIDKVLTRNTEEQK</sequence>
<accession>A8FHN9</accession>
<evidence type="ECO:0000255" key="1">
    <source>
        <dbReference type="HAMAP-Rule" id="MF_00444"/>
    </source>
</evidence>
<protein>
    <recommendedName>
        <fullName evidence="1">ATP-dependent Clp protease proteolytic subunit</fullName>
        <ecNumber evidence="1">3.4.21.92</ecNumber>
    </recommendedName>
    <alternativeName>
        <fullName evidence="1">Endopeptidase Clp</fullName>
    </alternativeName>
</protein>
<dbReference type="EC" id="3.4.21.92" evidence="1"/>
<dbReference type="EMBL" id="CP000813">
    <property type="protein sequence ID" value="ABV63756.1"/>
    <property type="molecule type" value="Genomic_DNA"/>
</dbReference>
<dbReference type="RefSeq" id="WP_007500118.1">
    <property type="nucleotide sequence ID" value="NZ_VEIS01000009.1"/>
</dbReference>
<dbReference type="SMR" id="A8FHN9"/>
<dbReference type="STRING" id="315750.BPUM_3102"/>
<dbReference type="MEROPS" id="S14.001"/>
<dbReference type="GeneID" id="66360987"/>
<dbReference type="KEGG" id="bpu:BPUM_3102"/>
<dbReference type="eggNOG" id="COG0740">
    <property type="taxonomic scope" value="Bacteria"/>
</dbReference>
<dbReference type="HOGENOM" id="CLU_058707_3_2_9"/>
<dbReference type="OrthoDB" id="9802800at2"/>
<dbReference type="Proteomes" id="UP000001355">
    <property type="component" value="Chromosome"/>
</dbReference>
<dbReference type="GO" id="GO:0005737">
    <property type="term" value="C:cytoplasm"/>
    <property type="evidence" value="ECO:0007669"/>
    <property type="project" value="UniProtKB-SubCell"/>
</dbReference>
<dbReference type="GO" id="GO:0009368">
    <property type="term" value="C:endopeptidase Clp complex"/>
    <property type="evidence" value="ECO:0007669"/>
    <property type="project" value="TreeGrafter"/>
</dbReference>
<dbReference type="GO" id="GO:0004176">
    <property type="term" value="F:ATP-dependent peptidase activity"/>
    <property type="evidence" value="ECO:0007669"/>
    <property type="project" value="InterPro"/>
</dbReference>
<dbReference type="GO" id="GO:0051117">
    <property type="term" value="F:ATPase binding"/>
    <property type="evidence" value="ECO:0007669"/>
    <property type="project" value="TreeGrafter"/>
</dbReference>
<dbReference type="GO" id="GO:0004252">
    <property type="term" value="F:serine-type endopeptidase activity"/>
    <property type="evidence" value="ECO:0007669"/>
    <property type="project" value="UniProtKB-UniRule"/>
</dbReference>
<dbReference type="GO" id="GO:0006515">
    <property type="term" value="P:protein quality control for misfolded or incompletely synthesized proteins"/>
    <property type="evidence" value="ECO:0007669"/>
    <property type="project" value="TreeGrafter"/>
</dbReference>
<dbReference type="CDD" id="cd07017">
    <property type="entry name" value="S14_ClpP_2"/>
    <property type="match status" value="1"/>
</dbReference>
<dbReference type="FunFam" id="3.90.226.10:FF:000001">
    <property type="entry name" value="ATP-dependent Clp protease proteolytic subunit"/>
    <property type="match status" value="1"/>
</dbReference>
<dbReference type="Gene3D" id="3.90.226.10">
    <property type="entry name" value="2-enoyl-CoA Hydratase, Chain A, domain 1"/>
    <property type="match status" value="1"/>
</dbReference>
<dbReference type="HAMAP" id="MF_00444">
    <property type="entry name" value="ClpP"/>
    <property type="match status" value="1"/>
</dbReference>
<dbReference type="InterPro" id="IPR001907">
    <property type="entry name" value="ClpP"/>
</dbReference>
<dbReference type="InterPro" id="IPR029045">
    <property type="entry name" value="ClpP/crotonase-like_dom_sf"/>
</dbReference>
<dbReference type="InterPro" id="IPR023562">
    <property type="entry name" value="ClpP/TepA"/>
</dbReference>
<dbReference type="InterPro" id="IPR033135">
    <property type="entry name" value="ClpP_His_AS"/>
</dbReference>
<dbReference type="InterPro" id="IPR018215">
    <property type="entry name" value="ClpP_Ser_AS"/>
</dbReference>
<dbReference type="NCBIfam" id="TIGR00493">
    <property type="entry name" value="clpP"/>
    <property type="match status" value="1"/>
</dbReference>
<dbReference type="NCBIfam" id="NF001368">
    <property type="entry name" value="PRK00277.1"/>
    <property type="match status" value="1"/>
</dbReference>
<dbReference type="NCBIfam" id="NF009205">
    <property type="entry name" value="PRK12553.1"/>
    <property type="match status" value="1"/>
</dbReference>
<dbReference type="PANTHER" id="PTHR10381">
    <property type="entry name" value="ATP-DEPENDENT CLP PROTEASE PROTEOLYTIC SUBUNIT"/>
    <property type="match status" value="1"/>
</dbReference>
<dbReference type="PANTHER" id="PTHR10381:SF70">
    <property type="entry name" value="ATP-DEPENDENT CLP PROTEASE PROTEOLYTIC SUBUNIT"/>
    <property type="match status" value="1"/>
</dbReference>
<dbReference type="Pfam" id="PF00574">
    <property type="entry name" value="CLP_protease"/>
    <property type="match status" value="1"/>
</dbReference>
<dbReference type="PRINTS" id="PR00127">
    <property type="entry name" value="CLPPROTEASEP"/>
</dbReference>
<dbReference type="SUPFAM" id="SSF52096">
    <property type="entry name" value="ClpP/crotonase"/>
    <property type="match status" value="1"/>
</dbReference>
<dbReference type="PROSITE" id="PS00382">
    <property type="entry name" value="CLP_PROTEASE_HIS"/>
    <property type="match status" value="1"/>
</dbReference>
<dbReference type="PROSITE" id="PS00381">
    <property type="entry name" value="CLP_PROTEASE_SER"/>
    <property type="match status" value="1"/>
</dbReference>